<name>ASTER_CAEEL</name>
<sequence>MQQNGDPRRTNRIVRYKPLDSTANQQQAISEDPLPEYMNVLGMIFSMCGLMIRMKWCSWLALVCSCISFANTRTSDDAKQIVSSFMLSVSAVVMSYLQNPSPIIPPWVTLLQS</sequence>
<comment type="subcellular location">
    <subcellularLocation>
        <location evidence="2">Membrane</location>
        <topology evidence="2">Single-pass membrane protein</topology>
    </subcellularLocation>
</comment>
<comment type="similarity">
    <text evidence="2">Belongs to the Asterix family.</text>
</comment>
<accession>Q09993</accession>
<gene>
    <name type="ORF">K10B2.4</name>
</gene>
<proteinExistence type="inferred from homology"/>
<feature type="chain" id="PRO_0000071608" description="Protein Asterix">
    <location>
        <begin position="1"/>
        <end position="113"/>
    </location>
</feature>
<feature type="transmembrane region" description="Helical" evidence="1">
    <location>
        <begin position="81"/>
        <end position="97"/>
    </location>
</feature>
<keyword id="KW-0472">Membrane</keyword>
<keyword id="KW-1185">Reference proteome</keyword>
<keyword id="KW-0812">Transmembrane</keyword>
<keyword id="KW-1133">Transmembrane helix</keyword>
<organism>
    <name type="scientific">Caenorhabditis elegans</name>
    <dbReference type="NCBI Taxonomy" id="6239"/>
    <lineage>
        <taxon>Eukaryota</taxon>
        <taxon>Metazoa</taxon>
        <taxon>Ecdysozoa</taxon>
        <taxon>Nematoda</taxon>
        <taxon>Chromadorea</taxon>
        <taxon>Rhabditida</taxon>
        <taxon>Rhabditina</taxon>
        <taxon>Rhabditomorpha</taxon>
        <taxon>Rhabditoidea</taxon>
        <taxon>Rhabditidae</taxon>
        <taxon>Peloderinae</taxon>
        <taxon>Caenorhabditis</taxon>
    </lineage>
</organism>
<reference key="1">
    <citation type="journal article" date="1998" name="Science">
        <title>Genome sequence of the nematode C. elegans: a platform for investigating biology.</title>
        <authorList>
            <consortium name="The C. elegans sequencing consortium"/>
        </authorList>
    </citation>
    <scope>NUCLEOTIDE SEQUENCE [LARGE SCALE GENOMIC DNA]</scope>
    <source>
        <strain>Bristol N2</strain>
    </source>
</reference>
<dbReference type="EMBL" id="FO080748">
    <property type="protein sequence ID" value="CCD66396.1"/>
    <property type="molecule type" value="Genomic_DNA"/>
</dbReference>
<dbReference type="PIR" id="T16603">
    <property type="entry name" value="T16603"/>
</dbReference>
<dbReference type="RefSeq" id="NP_495281.1">
    <property type="nucleotide sequence ID" value="NM_062880.6"/>
</dbReference>
<dbReference type="SMR" id="Q09993"/>
<dbReference type="FunCoup" id="Q09993">
    <property type="interactions" value="2292"/>
</dbReference>
<dbReference type="STRING" id="6239.K10B2.4.1"/>
<dbReference type="PaxDb" id="6239-K10B2.4"/>
<dbReference type="EnsemblMetazoa" id="K10B2.4.1">
    <property type="protein sequence ID" value="K10B2.4.1"/>
    <property type="gene ID" value="WBGene00019607"/>
</dbReference>
<dbReference type="GeneID" id="174054"/>
<dbReference type="KEGG" id="cel:CELE_K10B2.4"/>
<dbReference type="UCSC" id="K10B2.4">
    <property type="organism name" value="c. elegans"/>
</dbReference>
<dbReference type="AGR" id="WB:WBGene00019607"/>
<dbReference type="CTD" id="174054"/>
<dbReference type="WormBase" id="K10B2.4">
    <property type="protein sequence ID" value="CE02011"/>
    <property type="gene ID" value="WBGene00019607"/>
</dbReference>
<dbReference type="eggNOG" id="KOG3462">
    <property type="taxonomic scope" value="Eukaryota"/>
</dbReference>
<dbReference type="GeneTree" id="ENSGT00390000002121"/>
<dbReference type="HOGENOM" id="CLU_128526_1_2_1"/>
<dbReference type="InParanoid" id="Q09993"/>
<dbReference type="OMA" id="MFGLMMK"/>
<dbReference type="OrthoDB" id="284718at2759"/>
<dbReference type="PhylomeDB" id="Q09993"/>
<dbReference type="PRO" id="PR:Q09993"/>
<dbReference type="Proteomes" id="UP000001940">
    <property type="component" value="Chromosome II"/>
</dbReference>
<dbReference type="Bgee" id="WBGene00019607">
    <property type="expression patterns" value="Expressed in embryo and 4 other cell types or tissues"/>
</dbReference>
<dbReference type="GO" id="GO:0005789">
    <property type="term" value="C:endoplasmic reticulum membrane"/>
    <property type="evidence" value="ECO:0000318"/>
    <property type="project" value="GO_Central"/>
</dbReference>
<dbReference type="GO" id="GO:0044183">
    <property type="term" value="F:protein folding chaperone"/>
    <property type="evidence" value="ECO:0000318"/>
    <property type="project" value="GO_Central"/>
</dbReference>
<dbReference type="GO" id="GO:0045048">
    <property type="term" value="P:protein insertion into ER membrane"/>
    <property type="evidence" value="ECO:0000318"/>
    <property type="project" value="GO_Central"/>
</dbReference>
<dbReference type="InterPro" id="IPR005351">
    <property type="entry name" value="ASTER"/>
</dbReference>
<dbReference type="PANTHER" id="PTHR13193">
    <property type="entry name" value="CGI-140"/>
    <property type="match status" value="1"/>
</dbReference>
<dbReference type="PANTHER" id="PTHR13193:SF0">
    <property type="entry name" value="PAT COMPLEX SUBUNIT ASTERIX"/>
    <property type="match status" value="1"/>
</dbReference>
<dbReference type="Pfam" id="PF03669">
    <property type="entry name" value="ASTER"/>
    <property type="match status" value="1"/>
</dbReference>
<evidence type="ECO:0000255" key="1"/>
<evidence type="ECO:0000305" key="2"/>
<protein>
    <recommendedName>
        <fullName>Protein Asterix</fullName>
    </recommendedName>
</protein>